<organism>
    <name type="scientific">Rhodopseudomonas palustris (strain TIE-1)</name>
    <dbReference type="NCBI Taxonomy" id="395960"/>
    <lineage>
        <taxon>Bacteria</taxon>
        <taxon>Pseudomonadati</taxon>
        <taxon>Pseudomonadota</taxon>
        <taxon>Alphaproteobacteria</taxon>
        <taxon>Hyphomicrobiales</taxon>
        <taxon>Nitrobacteraceae</taxon>
        <taxon>Rhodopseudomonas</taxon>
    </lineage>
</organism>
<name>RL28_RHOPT</name>
<keyword id="KW-0687">Ribonucleoprotein</keyword>
<keyword id="KW-0689">Ribosomal protein</keyword>
<accession>B3QAG7</accession>
<comment type="similarity">
    <text evidence="1">Belongs to the bacterial ribosomal protein bL28 family.</text>
</comment>
<sequence>MSRRCELTAKGAQVGHKVSHSNIKTKRRFLPNLVNVTFLSDTLGRAVRLRVSTNALKSVDHRGGLDAYLLKAREAELSPKAVELKRAIAKKMAGEPVAAAS</sequence>
<gene>
    <name evidence="1" type="primary">rpmB</name>
    <name type="ordered locus">Rpal_0494</name>
</gene>
<evidence type="ECO:0000255" key="1">
    <source>
        <dbReference type="HAMAP-Rule" id="MF_00373"/>
    </source>
</evidence>
<evidence type="ECO:0000305" key="2"/>
<reference key="1">
    <citation type="submission" date="2008-05" db="EMBL/GenBank/DDBJ databases">
        <title>Complete sequence of Rhodopseudomonas palustris TIE-1.</title>
        <authorList>
            <consortium name="US DOE Joint Genome Institute"/>
            <person name="Lucas S."/>
            <person name="Copeland A."/>
            <person name="Lapidus A."/>
            <person name="Glavina del Rio T."/>
            <person name="Dalin E."/>
            <person name="Tice H."/>
            <person name="Pitluck S."/>
            <person name="Chain P."/>
            <person name="Malfatti S."/>
            <person name="Shin M."/>
            <person name="Vergez L."/>
            <person name="Lang D."/>
            <person name="Schmutz J."/>
            <person name="Larimer F."/>
            <person name="Land M."/>
            <person name="Hauser L."/>
            <person name="Kyrpides N."/>
            <person name="Mikhailova N."/>
            <person name="Emerson D."/>
            <person name="Newman D.K."/>
            <person name="Roden E."/>
            <person name="Richardson P."/>
        </authorList>
    </citation>
    <scope>NUCLEOTIDE SEQUENCE [LARGE SCALE GENOMIC DNA]</scope>
    <source>
        <strain>TIE-1</strain>
    </source>
</reference>
<feature type="chain" id="PRO_1000121679" description="Large ribosomal subunit protein bL28">
    <location>
        <begin position="1"/>
        <end position="101"/>
    </location>
</feature>
<protein>
    <recommendedName>
        <fullName evidence="1">Large ribosomal subunit protein bL28</fullName>
    </recommendedName>
    <alternativeName>
        <fullName evidence="2">50S ribosomal protein L28</fullName>
    </alternativeName>
</protein>
<proteinExistence type="inferred from homology"/>
<dbReference type="EMBL" id="CP001096">
    <property type="protein sequence ID" value="ACE99053.1"/>
    <property type="molecule type" value="Genomic_DNA"/>
</dbReference>
<dbReference type="RefSeq" id="WP_011156061.1">
    <property type="nucleotide sequence ID" value="NC_011004.1"/>
</dbReference>
<dbReference type="SMR" id="B3QAG7"/>
<dbReference type="GeneID" id="66891511"/>
<dbReference type="KEGG" id="rpt:Rpal_0494"/>
<dbReference type="HOGENOM" id="CLU_064548_4_2_5"/>
<dbReference type="OrthoDB" id="9805609at2"/>
<dbReference type="Proteomes" id="UP000001725">
    <property type="component" value="Chromosome"/>
</dbReference>
<dbReference type="GO" id="GO:0022625">
    <property type="term" value="C:cytosolic large ribosomal subunit"/>
    <property type="evidence" value="ECO:0007669"/>
    <property type="project" value="TreeGrafter"/>
</dbReference>
<dbReference type="GO" id="GO:0003735">
    <property type="term" value="F:structural constituent of ribosome"/>
    <property type="evidence" value="ECO:0007669"/>
    <property type="project" value="InterPro"/>
</dbReference>
<dbReference type="GO" id="GO:0006412">
    <property type="term" value="P:translation"/>
    <property type="evidence" value="ECO:0007669"/>
    <property type="project" value="UniProtKB-UniRule"/>
</dbReference>
<dbReference type="Gene3D" id="2.30.170.40">
    <property type="entry name" value="Ribosomal protein L28/L24"/>
    <property type="match status" value="1"/>
</dbReference>
<dbReference type="HAMAP" id="MF_00373">
    <property type="entry name" value="Ribosomal_bL28"/>
    <property type="match status" value="1"/>
</dbReference>
<dbReference type="InterPro" id="IPR026569">
    <property type="entry name" value="Ribosomal_bL28"/>
</dbReference>
<dbReference type="InterPro" id="IPR034704">
    <property type="entry name" value="Ribosomal_bL28/bL31-like_sf"/>
</dbReference>
<dbReference type="InterPro" id="IPR001383">
    <property type="entry name" value="Ribosomal_bL28_bact-type"/>
</dbReference>
<dbReference type="InterPro" id="IPR037147">
    <property type="entry name" value="Ribosomal_bL28_sf"/>
</dbReference>
<dbReference type="NCBIfam" id="TIGR00009">
    <property type="entry name" value="L28"/>
    <property type="match status" value="1"/>
</dbReference>
<dbReference type="PANTHER" id="PTHR13528">
    <property type="entry name" value="39S RIBOSOMAL PROTEIN L28, MITOCHONDRIAL"/>
    <property type="match status" value="1"/>
</dbReference>
<dbReference type="PANTHER" id="PTHR13528:SF2">
    <property type="entry name" value="LARGE RIBOSOMAL SUBUNIT PROTEIN BL28M"/>
    <property type="match status" value="1"/>
</dbReference>
<dbReference type="Pfam" id="PF00830">
    <property type="entry name" value="Ribosomal_L28"/>
    <property type="match status" value="1"/>
</dbReference>
<dbReference type="SUPFAM" id="SSF143800">
    <property type="entry name" value="L28p-like"/>
    <property type="match status" value="1"/>
</dbReference>